<sequence length="127" mass="14323">MNLFTHLFLISCGASLGAMSRHGLTLLLNPLFTFLSFGTLIANYIGCLIMGIMLAMFWHSSAFSTEYRLFFVTGFLGSLTTFSAFSAEVIENLLQHKWLEGITITSLHILGCLFFTTLGVFIWRYFQ</sequence>
<protein>
    <recommendedName>
        <fullName evidence="1">Fluoride-specific ion channel FluC</fullName>
    </recommendedName>
</protein>
<gene>
    <name evidence="1" type="primary">fluC</name>
    <name evidence="1" type="synonym">crcB</name>
    <name type="ordered locus">HSM_1243</name>
</gene>
<dbReference type="EMBL" id="CP000947">
    <property type="protein sequence ID" value="ACA30971.1"/>
    <property type="molecule type" value="Genomic_DNA"/>
</dbReference>
<dbReference type="RefSeq" id="WP_011608929.1">
    <property type="nucleotide sequence ID" value="NC_010519.1"/>
</dbReference>
<dbReference type="SMR" id="B0UTW8"/>
<dbReference type="STRING" id="228400.HSM_1243"/>
<dbReference type="GeneID" id="31487546"/>
<dbReference type="KEGG" id="hsm:HSM_1243"/>
<dbReference type="HOGENOM" id="CLU_114342_3_3_6"/>
<dbReference type="GO" id="GO:0005886">
    <property type="term" value="C:plasma membrane"/>
    <property type="evidence" value="ECO:0007669"/>
    <property type="project" value="UniProtKB-SubCell"/>
</dbReference>
<dbReference type="GO" id="GO:0062054">
    <property type="term" value="F:fluoride channel activity"/>
    <property type="evidence" value="ECO:0007669"/>
    <property type="project" value="UniProtKB-UniRule"/>
</dbReference>
<dbReference type="GO" id="GO:0046872">
    <property type="term" value="F:metal ion binding"/>
    <property type="evidence" value="ECO:0007669"/>
    <property type="project" value="UniProtKB-KW"/>
</dbReference>
<dbReference type="GO" id="GO:0140114">
    <property type="term" value="P:cellular detoxification of fluoride"/>
    <property type="evidence" value="ECO:0007669"/>
    <property type="project" value="UniProtKB-UniRule"/>
</dbReference>
<dbReference type="HAMAP" id="MF_00454">
    <property type="entry name" value="FluC"/>
    <property type="match status" value="1"/>
</dbReference>
<dbReference type="InterPro" id="IPR003691">
    <property type="entry name" value="FluC"/>
</dbReference>
<dbReference type="PANTHER" id="PTHR28259">
    <property type="entry name" value="FLUORIDE EXPORT PROTEIN 1-RELATED"/>
    <property type="match status" value="1"/>
</dbReference>
<dbReference type="PANTHER" id="PTHR28259:SF1">
    <property type="entry name" value="FLUORIDE EXPORT PROTEIN 1-RELATED"/>
    <property type="match status" value="1"/>
</dbReference>
<dbReference type="Pfam" id="PF02537">
    <property type="entry name" value="CRCB"/>
    <property type="match status" value="1"/>
</dbReference>
<name>FLUC_HISS2</name>
<feature type="chain" id="PRO_1000125133" description="Fluoride-specific ion channel FluC">
    <location>
        <begin position="1"/>
        <end position="127"/>
    </location>
</feature>
<feature type="transmembrane region" description="Helical" evidence="1">
    <location>
        <begin position="7"/>
        <end position="27"/>
    </location>
</feature>
<feature type="transmembrane region" description="Helical" evidence="1">
    <location>
        <begin position="37"/>
        <end position="57"/>
    </location>
</feature>
<feature type="transmembrane region" description="Helical" evidence="1">
    <location>
        <begin position="70"/>
        <end position="90"/>
    </location>
</feature>
<feature type="transmembrane region" description="Helical" evidence="1">
    <location>
        <begin position="102"/>
        <end position="122"/>
    </location>
</feature>
<feature type="binding site" evidence="1">
    <location>
        <position position="77"/>
    </location>
    <ligand>
        <name>Na(+)</name>
        <dbReference type="ChEBI" id="CHEBI:29101"/>
        <note>structural</note>
    </ligand>
</feature>
<feature type="binding site" evidence="1">
    <location>
        <position position="80"/>
    </location>
    <ligand>
        <name>Na(+)</name>
        <dbReference type="ChEBI" id="CHEBI:29101"/>
        <note>structural</note>
    </ligand>
</feature>
<comment type="function">
    <text evidence="1">Fluoride-specific ion channel. Important for reducing fluoride concentration in the cell, thus reducing its toxicity.</text>
</comment>
<comment type="catalytic activity">
    <reaction evidence="1">
        <text>fluoride(in) = fluoride(out)</text>
        <dbReference type="Rhea" id="RHEA:76159"/>
        <dbReference type="ChEBI" id="CHEBI:17051"/>
    </reaction>
    <physiologicalReaction direction="left-to-right" evidence="1">
        <dbReference type="Rhea" id="RHEA:76160"/>
    </physiologicalReaction>
</comment>
<comment type="activity regulation">
    <text evidence="1">Na(+) is not transported, but it plays an essential structural role and its presence is essential for fluoride channel function.</text>
</comment>
<comment type="subcellular location">
    <subcellularLocation>
        <location evidence="1">Cell inner membrane</location>
        <topology evidence="1">Multi-pass membrane protein</topology>
    </subcellularLocation>
</comment>
<comment type="similarity">
    <text evidence="1">Belongs to the fluoride channel Fluc/FEX (TC 1.A.43) family.</text>
</comment>
<proteinExistence type="inferred from homology"/>
<keyword id="KW-0997">Cell inner membrane</keyword>
<keyword id="KW-1003">Cell membrane</keyword>
<keyword id="KW-0407">Ion channel</keyword>
<keyword id="KW-0406">Ion transport</keyword>
<keyword id="KW-0472">Membrane</keyword>
<keyword id="KW-0479">Metal-binding</keyword>
<keyword id="KW-0915">Sodium</keyword>
<keyword id="KW-0812">Transmembrane</keyword>
<keyword id="KW-1133">Transmembrane helix</keyword>
<keyword id="KW-0813">Transport</keyword>
<evidence type="ECO:0000255" key="1">
    <source>
        <dbReference type="HAMAP-Rule" id="MF_00454"/>
    </source>
</evidence>
<accession>B0UTW8</accession>
<organism>
    <name type="scientific">Histophilus somni (strain 2336)</name>
    <name type="common">Haemophilus somnus</name>
    <dbReference type="NCBI Taxonomy" id="228400"/>
    <lineage>
        <taxon>Bacteria</taxon>
        <taxon>Pseudomonadati</taxon>
        <taxon>Pseudomonadota</taxon>
        <taxon>Gammaproteobacteria</taxon>
        <taxon>Pasteurellales</taxon>
        <taxon>Pasteurellaceae</taxon>
        <taxon>Histophilus</taxon>
    </lineage>
</organism>
<reference key="1">
    <citation type="submission" date="2008-02" db="EMBL/GenBank/DDBJ databases">
        <title>Complete sequence of Haemophilus somnus 2336.</title>
        <authorList>
            <consortium name="US DOE Joint Genome Institute"/>
            <person name="Siddaramappa S."/>
            <person name="Duncan A.J."/>
            <person name="Challacombe J.F."/>
            <person name="Rainey D."/>
            <person name="Gillaspy A.F."/>
            <person name="Carson M."/>
            <person name="Gipson J."/>
            <person name="Gipson M."/>
            <person name="Bruce D."/>
            <person name="Detter J.C."/>
            <person name="Han C.S."/>
            <person name="Land M."/>
            <person name="Tapia R."/>
            <person name="Thompson L.S."/>
            <person name="Orvis J."/>
            <person name="Zaitshik J."/>
            <person name="Barnes G."/>
            <person name="Brettin T.S."/>
            <person name="Dyer D.W."/>
            <person name="Inzana T.J."/>
        </authorList>
    </citation>
    <scope>NUCLEOTIDE SEQUENCE [LARGE SCALE GENOMIC DNA]</scope>
    <source>
        <strain>2336</strain>
    </source>
</reference>